<keyword id="KW-1185">Reference proteome</keyword>
<keyword id="KW-0687">Ribonucleoprotein</keyword>
<keyword id="KW-0689">Ribosomal protein</keyword>
<keyword id="KW-0694">RNA-binding</keyword>
<keyword id="KW-0699">rRNA-binding</keyword>
<sequence length="89" mass="10501">MALTSEQKKNVISRYKLHDNDTGSPEVQVAILTERINSLTEHLKLHKGDHHSRRGLLKMVGQRRALLNYLRDRHYERYRALIDKLGLRK</sequence>
<name>RS15_PELTS</name>
<proteinExistence type="inferred from homology"/>
<evidence type="ECO:0000255" key="1">
    <source>
        <dbReference type="HAMAP-Rule" id="MF_01343"/>
    </source>
</evidence>
<evidence type="ECO:0000305" key="2"/>
<accession>A5D2S5</accession>
<gene>
    <name evidence="1" type="primary">rpsO</name>
    <name type="ordered locus">PTH_1274</name>
</gene>
<comment type="function">
    <text evidence="1">One of the primary rRNA binding proteins, it binds directly to 16S rRNA where it helps nucleate assembly of the platform of the 30S subunit by binding and bridging several RNA helices of the 16S rRNA.</text>
</comment>
<comment type="function">
    <text evidence="1">Forms an intersubunit bridge (bridge B4) with the 23S rRNA of the 50S subunit in the ribosome.</text>
</comment>
<comment type="subunit">
    <text evidence="1">Part of the 30S ribosomal subunit. Forms a bridge to the 50S subunit in the 70S ribosome, contacting the 23S rRNA.</text>
</comment>
<comment type="similarity">
    <text evidence="1">Belongs to the universal ribosomal protein uS15 family.</text>
</comment>
<organism>
    <name type="scientific">Pelotomaculum thermopropionicum (strain DSM 13744 / JCM 10971 / SI)</name>
    <dbReference type="NCBI Taxonomy" id="370438"/>
    <lineage>
        <taxon>Bacteria</taxon>
        <taxon>Bacillati</taxon>
        <taxon>Bacillota</taxon>
        <taxon>Clostridia</taxon>
        <taxon>Eubacteriales</taxon>
        <taxon>Desulfotomaculaceae</taxon>
        <taxon>Pelotomaculum</taxon>
    </lineage>
</organism>
<feature type="chain" id="PRO_0000354210" description="Small ribosomal subunit protein uS15">
    <location>
        <begin position="1"/>
        <end position="89"/>
    </location>
</feature>
<protein>
    <recommendedName>
        <fullName evidence="1">Small ribosomal subunit protein uS15</fullName>
    </recommendedName>
    <alternativeName>
        <fullName evidence="2">30S ribosomal protein S15</fullName>
    </alternativeName>
</protein>
<dbReference type="EMBL" id="AP009389">
    <property type="protein sequence ID" value="BAF59455.1"/>
    <property type="molecule type" value="Genomic_DNA"/>
</dbReference>
<dbReference type="SMR" id="A5D2S5"/>
<dbReference type="STRING" id="370438.PTH_1274"/>
<dbReference type="KEGG" id="pth:PTH_1274"/>
<dbReference type="eggNOG" id="COG0184">
    <property type="taxonomic scope" value="Bacteria"/>
</dbReference>
<dbReference type="HOGENOM" id="CLU_148518_0_0_9"/>
<dbReference type="Proteomes" id="UP000006556">
    <property type="component" value="Chromosome"/>
</dbReference>
<dbReference type="GO" id="GO:0022627">
    <property type="term" value="C:cytosolic small ribosomal subunit"/>
    <property type="evidence" value="ECO:0007669"/>
    <property type="project" value="TreeGrafter"/>
</dbReference>
<dbReference type="GO" id="GO:0019843">
    <property type="term" value="F:rRNA binding"/>
    <property type="evidence" value="ECO:0007669"/>
    <property type="project" value="UniProtKB-UniRule"/>
</dbReference>
<dbReference type="GO" id="GO:0003735">
    <property type="term" value="F:structural constituent of ribosome"/>
    <property type="evidence" value="ECO:0007669"/>
    <property type="project" value="InterPro"/>
</dbReference>
<dbReference type="GO" id="GO:0006412">
    <property type="term" value="P:translation"/>
    <property type="evidence" value="ECO:0007669"/>
    <property type="project" value="UniProtKB-UniRule"/>
</dbReference>
<dbReference type="CDD" id="cd00353">
    <property type="entry name" value="Ribosomal_S15p_S13e"/>
    <property type="match status" value="1"/>
</dbReference>
<dbReference type="FunFam" id="1.10.287.10:FF:000002">
    <property type="entry name" value="30S ribosomal protein S15"/>
    <property type="match status" value="1"/>
</dbReference>
<dbReference type="Gene3D" id="6.10.250.3130">
    <property type="match status" value="1"/>
</dbReference>
<dbReference type="Gene3D" id="1.10.287.10">
    <property type="entry name" value="S15/NS1, RNA-binding"/>
    <property type="match status" value="1"/>
</dbReference>
<dbReference type="HAMAP" id="MF_01343_B">
    <property type="entry name" value="Ribosomal_uS15_B"/>
    <property type="match status" value="1"/>
</dbReference>
<dbReference type="InterPro" id="IPR000589">
    <property type="entry name" value="Ribosomal_uS15"/>
</dbReference>
<dbReference type="InterPro" id="IPR005290">
    <property type="entry name" value="Ribosomal_uS15_bac-type"/>
</dbReference>
<dbReference type="InterPro" id="IPR009068">
    <property type="entry name" value="uS15_NS1_RNA-bd_sf"/>
</dbReference>
<dbReference type="NCBIfam" id="TIGR00952">
    <property type="entry name" value="S15_bact"/>
    <property type="match status" value="1"/>
</dbReference>
<dbReference type="PANTHER" id="PTHR23321">
    <property type="entry name" value="RIBOSOMAL PROTEIN S15, BACTERIAL AND ORGANELLAR"/>
    <property type="match status" value="1"/>
</dbReference>
<dbReference type="PANTHER" id="PTHR23321:SF26">
    <property type="entry name" value="SMALL RIBOSOMAL SUBUNIT PROTEIN US15M"/>
    <property type="match status" value="1"/>
</dbReference>
<dbReference type="Pfam" id="PF00312">
    <property type="entry name" value="Ribosomal_S15"/>
    <property type="match status" value="1"/>
</dbReference>
<dbReference type="SMART" id="SM01387">
    <property type="entry name" value="Ribosomal_S15"/>
    <property type="match status" value="1"/>
</dbReference>
<dbReference type="SUPFAM" id="SSF47060">
    <property type="entry name" value="S15/NS1 RNA-binding domain"/>
    <property type="match status" value="1"/>
</dbReference>
<dbReference type="PROSITE" id="PS00362">
    <property type="entry name" value="RIBOSOMAL_S15"/>
    <property type="match status" value="1"/>
</dbReference>
<reference key="1">
    <citation type="journal article" date="2008" name="Genome Res.">
        <title>The genome of Pelotomaculum thermopropionicum reveals niche-associated evolution in anaerobic microbiota.</title>
        <authorList>
            <person name="Kosaka T."/>
            <person name="Kato S."/>
            <person name="Shimoyama T."/>
            <person name="Ishii S."/>
            <person name="Abe T."/>
            <person name="Watanabe K."/>
        </authorList>
    </citation>
    <scope>NUCLEOTIDE SEQUENCE [LARGE SCALE GENOMIC DNA]</scope>
    <source>
        <strain>DSM 13744 / JCM 10971 / SI</strain>
    </source>
</reference>